<keyword id="KW-0240">DNA-directed RNA polymerase</keyword>
<keyword id="KW-0460">Magnesium</keyword>
<keyword id="KW-0479">Metal-binding</keyword>
<keyword id="KW-0548">Nucleotidyltransferase</keyword>
<keyword id="KW-1185">Reference proteome</keyword>
<keyword id="KW-0804">Transcription</keyword>
<keyword id="KW-0808">Transferase</keyword>
<keyword id="KW-0862">Zinc</keyword>
<name>RPOC1_PROMT</name>
<accession>Q46J23</accession>
<reference key="1">
    <citation type="journal article" date="2007" name="PLoS Genet.">
        <title>Patterns and implications of gene gain and loss in the evolution of Prochlorococcus.</title>
        <authorList>
            <person name="Kettler G.C."/>
            <person name="Martiny A.C."/>
            <person name="Huang K."/>
            <person name="Zucker J."/>
            <person name="Coleman M.L."/>
            <person name="Rodrigue S."/>
            <person name="Chen F."/>
            <person name="Lapidus A."/>
            <person name="Ferriera S."/>
            <person name="Johnson J."/>
            <person name="Steglich C."/>
            <person name="Church G.M."/>
            <person name="Richardson P."/>
            <person name="Chisholm S.W."/>
        </authorList>
    </citation>
    <scope>NUCLEOTIDE SEQUENCE [LARGE SCALE GENOMIC DNA]</scope>
    <source>
        <strain>NATL2A</strain>
    </source>
</reference>
<evidence type="ECO:0000255" key="1">
    <source>
        <dbReference type="HAMAP-Rule" id="MF_01323"/>
    </source>
</evidence>
<proteinExistence type="inferred from homology"/>
<feature type="chain" id="PRO_0000225316" description="DNA-directed RNA polymerase subunit gamma">
    <location>
        <begin position="1"/>
        <end position="635"/>
    </location>
</feature>
<feature type="binding site" evidence="1">
    <location>
        <position position="74"/>
    </location>
    <ligand>
        <name>Zn(2+)</name>
        <dbReference type="ChEBI" id="CHEBI:29105"/>
    </ligand>
</feature>
<feature type="binding site" evidence="1">
    <location>
        <position position="76"/>
    </location>
    <ligand>
        <name>Zn(2+)</name>
        <dbReference type="ChEBI" id="CHEBI:29105"/>
    </ligand>
</feature>
<feature type="binding site" evidence="1">
    <location>
        <position position="89"/>
    </location>
    <ligand>
        <name>Zn(2+)</name>
        <dbReference type="ChEBI" id="CHEBI:29105"/>
    </ligand>
</feature>
<feature type="binding site" evidence="1">
    <location>
        <position position="92"/>
    </location>
    <ligand>
        <name>Zn(2+)</name>
        <dbReference type="ChEBI" id="CHEBI:29105"/>
    </ligand>
</feature>
<feature type="binding site" evidence="1">
    <location>
        <position position="471"/>
    </location>
    <ligand>
        <name>Mg(2+)</name>
        <dbReference type="ChEBI" id="CHEBI:18420"/>
    </ligand>
</feature>
<feature type="binding site" evidence="1">
    <location>
        <position position="473"/>
    </location>
    <ligand>
        <name>Mg(2+)</name>
        <dbReference type="ChEBI" id="CHEBI:18420"/>
    </ligand>
</feature>
<feature type="binding site" evidence="1">
    <location>
        <position position="475"/>
    </location>
    <ligand>
        <name>Mg(2+)</name>
        <dbReference type="ChEBI" id="CHEBI:18420"/>
    </ligand>
</feature>
<comment type="function">
    <text evidence="1">DNA-dependent RNA polymerase catalyzes the transcription of DNA into RNA using the four ribonucleoside triphosphates as substrates.</text>
</comment>
<comment type="catalytic activity">
    <reaction evidence="1">
        <text>RNA(n) + a ribonucleoside 5'-triphosphate = RNA(n+1) + diphosphate</text>
        <dbReference type="Rhea" id="RHEA:21248"/>
        <dbReference type="Rhea" id="RHEA-COMP:14527"/>
        <dbReference type="Rhea" id="RHEA-COMP:17342"/>
        <dbReference type="ChEBI" id="CHEBI:33019"/>
        <dbReference type="ChEBI" id="CHEBI:61557"/>
        <dbReference type="ChEBI" id="CHEBI:140395"/>
        <dbReference type="EC" id="2.7.7.6"/>
    </reaction>
</comment>
<comment type="cofactor">
    <cofactor evidence="1">
        <name>Mg(2+)</name>
        <dbReference type="ChEBI" id="CHEBI:18420"/>
    </cofactor>
    <text evidence="1">Binds 1 Mg(2+) ion per subunit.</text>
</comment>
<comment type="cofactor">
    <cofactor evidence="1">
        <name>Zn(2+)</name>
        <dbReference type="ChEBI" id="CHEBI:29105"/>
    </cofactor>
    <text evidence="1">Binds 1 Zn(2+) ion per subunit.</text>
</comment>
<comment type="subunit">
    <text evidence="1">In cyanobacteria the RNAP catalytic core is composed of 2 alpha, 1 beta, 1 beta', 1 gamma and 1 omega subunit. When a sigma factor is associated with the core the holoenzyme is formed, which can initiate transcription.</text>
</comment>
<comment type="similarity">
    <text evidence="1">Belongs to the RNA polymerase beta' chain family. RpoC1 subfamily.</text>
</comment>
<organism>
    <name type="scientific">Prochlorococcus marinus (strain NATL2A)</name>
    <dbReference type="NCBI Taxonomy" id="59920"/>
    <lineage>
        <taxon>Bacteria</taxon>
        <taxon>Bacillati</taxon>
        <taxon>Cyanobacteriota</taxon>
        <taxon>Cyanophyceae</taxon>
        <taxon>Synechococcales</taxon>
        <taxon>Prochlorococcaceae</taxon>
        <taxon>Prochlorococcus</taxon>
    </lineage>
</organism>
<protein>
    <recommendedName>
        <fullName evidence="1">DNA-directed RNA polymerase subunit gamma</fullName>
        <shortName evidence="1">RNAP subunit gamma</shortName>
        <ecNumber evidence="1">2.7.7.6</ecNumber>
    </recommendedName>
    <alternativeName>
        <fullName evidence="1">RNA polymerase subunit gamma</fullName>
    </alternativeName>
    <alternativeName>
        <fullName evidence="1">Transcriptase subunit gamma</fullName>
    </alternativeName>
</protein>
<dbReference type="EC" id="2.7.7.6" evidence="1"/>
<dbReference type="EMBL" id="CP000095">
    <property type="protein sequence ID" value="AAZ58505.1"/>
    <property type="molecule type" value="Genomic_DNA"/>
</dbReference>
<dbReference type="RefSeq" id="WP_011295360.1">
    <property type="nucleotide sequence ID" value="NC_007335.2"/>
</dbReference>
<dbReference type="SMR" id="Q46J23"/>
<dbReference type="STRING" id="59920.PMN2A_1015"/>
<dbReference type="KEGG" id="pmn:PMN2A_1015"/>
<dbReference type="HOGENOM" id="CLU_030022_2_0_3"/>
<dbReference type="OrthoDB" id="9815296at2"/>
<dbReference type="PhylomeDB" id="Q46J23"/>
<dbReference type="Proteomes" id="UP000002535">
    <property type="component" value="Chromosome"/>
</dbReference>
<dbReference type="GO" id="GO:0000428">
    <property type="term" value="C:DNA-directed RNA polymerase complex"/>
    <property type="evidence" value="ECO:0007669"/>
    <property type="project" value="UniProtKB-KW"/>
</dbReference>
<dbReference type="GO" id="GO:0003677">
    <property type="term" value="F:DNA binding"/>
    <property type="evidence" value="ECO:0007669"/>
    <property type="project" value="UniProtKB-UniRule"/>
</dbReference>
<dbReference type="GO" id="GO:0003899">
    <property type="term" value="F:DNA-directed RNA polymerase activity"/>
    <property type="evidence" value="ECO:0007669"/>
    <property type="project" value="UniProtKB-UniRule"/>
</dbReference>
<dbReference type="GO" id="GO:0000287">
    <property type="term" value="F:magnesium ion binding"/>
    <property type="evidence" value="ECO:0007669"/>
    <property type="project" value="UniProtKB-UniRule"/>
</dbReference>
<dbReference type="GO" id="GO:0008270">
    <property type="term" value="F:zinc ion binding"/>
    <property type="evidence" value="ECO:0007669"/>
    <property type="project" value="UniProtKB-UniRule"/>
</dbReference>
<dbReference type="GO" id="GO:0006351">
    <property type="term" value="P:DNA-templated transcription"/>
    <property type="evidence" value="ECO:0007669"/>
    <property type="project" value="UniProtKB-UniRule"/>
</dbReference>
<dbReference type="Gene3D" id="1.10.40.90">
    <property type="match status" value="1"/>
</dbReference>
<dbReference type="Gene3D" id="2.40.40.20">
    <property type="match status" value="1"/>
</dbReference>
<dbReference type="Gene3D" id="4.10.860.120">
    <property type="entry name" value="RNA polymerase II, clamp domain"/>
    <property type="match status" value="1"/>
</dbReference>
<dbReference type="Gene3D" id="1.10.274.100">
    <property type="entry name" value="RNA polymerase Rpb1, domain 3"/>
    <property type="match status" value="1"/>
</dbReference>
<dbReference type="HAMAP" id="MF_01323">
    <property type="entry name" value="RNApol_bact_RpoC1"/>
    <property type="match status" value="1"/>
</dbReference>
<dbReference type="InterPro" id="IPR012755">
    <property type="entry name" value="DNA-dir_RpoC1_gamma"/>
</dbReference>
<dbReference type="InterPro" id="IPR045867">
    <property type="entry name" value="DNA-dir_RpoC_beta_prime"/>
</dbReference>
<dbReference type="InterPro" id="IPR000722">
    <property type="entry name" value="RNA_pol_asu"/>
</dbReference>
<dbReference type="InterPro" id="IPR006592">
    <property type="entry name" value="RNA_pol_N"/>
</dbReference>
<dbReference type="InterPro" id="IPR007080">
    <property type="entry name" value="RNA_pol_Rpb1_1"/>
</dbReference>
<dbReference type="InterPro" id="IPR007066">
    <property type="entry name" value="RNA_pol_Rpb1_3"/>
</dbReference>
<dbReference type="InterPro" id="IPR042102">
    <property type="entry name" value="RNA_pol_Rpb1_3_sf"/>
</dbReference>
<dbReference type="InterPro" id="IPR044893">
    <property type="entry name" value="RNA_pol_Rpb1_clamp_domain"/>
</dbReference>
<dbReference type="InterPro" id="IPR034678">
    <property type="entry name" value="RNApol_RpoC1"/>
</dbReference>
<dbReference type="NCBIfam" id="NF002729">
    <property type="entry name" value="PRK02625.1"/>
    <property type="match status" value="1"/>
</dbReference>
<dbReference type="NCBIfam" id="TIGR02387">
    <property type="entry name" value="rpoC1_cyan"/>
    <property type="match status" value="1"/>
</dbReference>
<dbReference type="PANTHER" id="PTHR19376">
    <property type="entry name" value="DNA-DIRECTED RNA POLYMERASE"/>
    <property type="match status" value="1"/>
</dbReference>
<dbReference type="PANTHER" id="PTHR19376:SF54">
    <property type="entry name" value="DNA-DIRECTED RNA POLYMERASE SUBUNIT BETA"/>
    <property type="match status" value="1"/>
</dbReference>
<dbReference type="Pfam" id="PF04997">
    <property type="entry name" value="RNA_pol_Rpb1_1"/>
    <property type="match status" value="1"/>
</dbReference>
<dbReference type="Pfam" id="PF00623">
    <property type="entry name" value="RNA_pol_Rpb1_2"/>
    <property type="match status" value="1"/>
</dbReference>
<dbReference type="Pfam" id="PF04983">
    <property type="entry name" value="RNA_pol_Rpb1_3"/>
    <property type="match status" value="1"/>
</dbReference>
<dbReference type="SMART" id="SM00663">
    <property type="entry name" value="RPOLA_N"/>
    <property type="match status" value="1"/>
</dbReference>
<dbReference type="SUPFAM" id="SSF64484">
    <property type="entry name" value="beta and beta-prime subunits of DNA dependent RNA-polymerase"/>
    <property type="match status" value="1"/>
</dbReference>
<gene>
    <name evidence="1" type="primary">rpoC1</name>
    <name type="ordered locus">PMN2A_1015</name>
</gene>
<sequence>MTNSNLRTENHFDYVKIKLASPERVMEWGQRTLPNGQVVGEVTKPETINYRTLKPEMDGLFCEKIFGPSKDWECHCGKYKRVRHRGIVCERCGVEVTESRVRRHRMGFIKLAAPVSHVWYLKGIPSYVAILLDMPLRDVEQIVYFNCYVVLDIGDSKDLKYKQLLTEDEWLEIEDEIYAEDSTIENEPIVGIGAEALKQLLEDLNLKEVAEQLREDIATSKGQKRAKLIKRLRVIDNFIATSASPEWMVLDAIPVIPPDLRPMVQLDGGRFATSDLNDLYRRVINRNNRLARLQEILAPEIIVRNEKRMLQEAVDALIDNGRRGRTVVGANNRPLKSLSDIIEGKQGRFRQNLLGKRVDYSGRSVIVVGPKLKMHQCGLPKEMAIELFQPFVIHRLIRQNIVNNIKAAKKLIQKADDEVMQVLQEVIEGHPILLNRAPTLHRLGIQAFEPKLVAGRAIQLHPLVCPAFNADFDGDQMAVHVPLAIEAQTEARMLMLASNNILSPATGDPIVTPSQDMVLGSYYLTAIQPQSKQPKFGDYSNTYASLEDVLQALEDKRIDLHDWVWVRFSGEIEDDDELQNPLKSETLKDGTRIEEWTYRRDRLDEDGSLISRYILTTVGRVVMNHTIIDAVAATS</sequence>